<comment type="function">
    <text evidence="4">Female-specific protein which lacks detectable lipase activity against a range of substrates. Binds the hydrophobic lipid 1-aminoanthracene with high affinity.</text>
</comment>
<comment type="subunit">
    <text evidence="4">Monomer.</text>
</comment>
<comment type="subcellular location">
    <subcellularLocation>
        <location evidence="4">Secreted</location>
    </subcellularLocation>
    <text evidence="4">Secreted by the female lacrimal gland into tears.</text>
</comment>
<comment type="tissue specificity">
    <text evidence="4">Expressed in female lacrimal gland acinar cells from where it is secreted into tears (at protein level).</text>
</comment>
<comment type="developmental stage">
    <text evidence="4">Expressed primarily during lactation although very low levels are detected in a small percentage of non-lactating females (at protein level). Not expressed in late-pregnant or 1-day postpartum dams but high levels are found in 9-day and 20-day postpartum lactating dams with no expression 20 days after weaning (at protein level).</text>
</comment>
<comment type="induction">
    <text evidence="4">Repressed by the androgen dihydrotesterone (DHT), the estrogen estradiol (E2) and the thyroid hormone triiodothyronine (T3) (at protein level).</text>
</comment>
<comment type="PTM">
    <text evidence="4">N-glycosylated.</text>
</comment>
<comment type="similarity">
    <text evidence="3">Belongs to the AB hydrolase superfamily. Lipase family.</text>
</comment>
<sequence length="398" mass="44666">MSWLLSTMCLVHVCGNIFCLFETTTNPEAYMKVSKIVNHWGYTSEEYEAVTEDGYILPLNRIPHGKNNINSTAPKKVVLCQHGLFSTAGVWVSNPPSNSLAFILADAGFDVWMGNSRGSTWAKKHLYLDPNSKEFWAFSFDEMIKYDLPATINFILKKTGQKQIYYIGHSQGALIALGAFSTNQKLAEKIKLCFLLAPIATLKHVEGIVSLLPYFYPTAFKVVFSEKEFLSAVAFSKLHGYSCNAKVINDGCVAIFLSMTGYVPQHLNKSRVDVYIRHSLAGTSVQTLLHYRQAIKKGVFEAYDWGSQSLNMLHYNQTTPPLYNVEDMKIPTAMWSGGKDSLADTKDVAHLVPKISNLIYHKITADFSHLDFTVGKNAYYVSNDILKLLDKSETENLH</sequence>
<reference evidence="7" key="1">
    <citation type="journal article" date="2007" name="Biochim. Biophys. Acta">
        <title>Purification, cloning and regulation of a novel acid-lipase-like protein of hamster expressed in lacrimal glands and tears during lactation.</title>
        <authorList>
            <person name="Paliwal A."/>
            <person name="De P.K."/>
        </authorList>
    </citation>
    <scope>NUCLEOTIDE SEQUENCE [MRNA]</scope>
    <scope>PROTEIN SEQUENCE OF 20-37; 330-339; 364-376 AND 377-387</scope>
    <scope>FUNCTION</scope>
    <scope>SUBUNIT</scope>
    <scope>SUBCELLULAR LOCATION</scope>
    <scope>TISSUE SPECIFICITY</scope>
    <scope>DEVELOPMENTAL STAGE</scope>
    <scope>INDUCTION</scope>
    <scope>GLYCOSYLATION</scope>
    <source>
        <tissue evidence="5">Lacrimal gland</tissue>
    </source>
</reference>
<feature type="signal peptide" evidence="4">
    <location>
        <begin position="1"/>
        <end position="19"/>
    </location>
</feature>
<feature type="chain" id="PRO_0000433366" description="Tear acid lipase-like protein" evidence="6">
    <location>
        <begin position="20"/>
        <end position="398"/>
    </location>
</feature>
<feature type="active site" description="Nucleophile" evidence="1">
    <location>
        <position position="170"/>
    </location>
</feature>
<feature type="active site" description="Charge relay system" evidence="1">
    <location>
        <position position="340"/>
    </location>
</feature>
<feature type="active site" description="Charge relay system" evidence="1">
    <location>
        <position position="369"/>
    </location>
</feature>
<feature type="glycosylation site" description="N-linked (GlcNAc...) asparagine" evidence="2">
    <location>
        <position position="268"/>
    </location>
</feature>
<feature type="disulfide bond" evidence="1">
    <location>
        <begin position="243"/>
        <end position="252"/>
    </location>
</feature>
<feature type="sequence conflict" description="In Ref. 1; AA sequence." evidence="6" ref="1">
    <original>H</original>
    <variation>E</variation>
    <location>
        <position position="369"/>
    </location>
</feature>
<proteinExistence type="evidence at protein level"/>
<name>TALLP_MESAU</name>
<accession>Q3YBN2</accession>
<protein>
    <recommendedName>
        <fullName evidence="5">Tear acid lipase-like protein</fullName>
        <shortName evidence="5">TALLP</shortName>
    </recommendedName>
</protein>
<dbReference type="EMBL" id="DQ144735">
    <property type="protein sequence ID" value="AAZ73232.1"/>
    <property type="molecule type" value="mRNA"/>
</dbReference>
<dbReference type="RefSeq" id="NP_001268622.1">
    <property type="nucleotide sequence ID" value="NM_001281693.1"/>
</dbReference>
<dbReference type="SMR" id="Q3YBN2"/>
<dbReference type="STRING" id="10036.ENSMAUP00000004104"/>
<dbReference type="ESTHER" id="mesau-q3ybn2">
    <property type="family name" value="Acidic_Lipase"/>
</dbReference>
<dbReference type="Ensembl" id="ENSMAUT00000006153">
    <property type="protein sequence ID" value="ENSMAUP00000004104"/>
    <property type="gene ID" value="ENSMAUG00000004988"/>
</dbReference>
<dbReference type="GeneID" id="101824484"/>
<dbReference type="KEGG" id="maua:101824484"/>
<dbReference type="eggNOG" id="KOG2624">
    <property type="taxonomic scope" value="Eukaryota"/>
</dbReference>
<dbReference type="OrthoDB" id="9974421at2759"/>
<dbReference type="Proteomes" id="UP000189706">
    <property type="component" value="Unplaced"/>
</dbReference>
<dbReference type="GO" id="GO:0005615">
    <property type="term" value="C:extracellular space"/>
    <property type="evidence" value="ECO:0000314"/>
    <property type="project" value="UniProtKB"/>
</dbReference>
<dbReference type="GO" id="GO:0016788">
    <property type="term" value="F:hydrolase activity, acting on ester bonds"/>
    <property type="evidence" value="ECO:0007669"/>
    <property type="project" value="InterPro"/>
</dbReference>
<dbReference type="GO" id="GO:0008289">
    <property type="term" value="F:lipid binding"/>
    <property type="evidence" value="ECO:0007669"/>
    <property type="project" value="UniProtKB-KW"/>
</dbReference>
<dbReference type="GO" id="GO:0006629">
    <property type="term" value="P:lipid metabolic process"/>
    <property type="evidence" value="ECO:0007669"/>
    <property type="project" value="InterPro"/>
</dbReference>
<dbReference type="FunFam" id="3.40.50.1820:FF:000012">
    <property type="entry name" value="Lipase"/>
    <property type="match status" value="1"/>
</dbReference>
<dbReference type="Gene3D" id="3.40.50.1820">
    <property type="entry name" value="alpha/beta hydrolase"/>
    <property type="match status" value="1"/>
</dbReference>
<dbReference type="InterPro" id="IPR029058">
    <property type="entry name" value="AB_hydrolase_fold"/>
</dbReference>
<dbReference type="InterPro" id="IPR006693">
    <property type="entry name" value="AB_hydrolase_lipase"/>
</dbReference>
<dbReference type="InterPro" id="IPR025483">
    <property type="entry name" value="Lipase_euk"/>
</dbReference>
<dbReference type="PANTHER" id="PTHR11005">
    <property type="entry name" value="LYSOSOMAL ACID LIPASE-RELATED"/>
    <property type="match status" value="1"/>
</dbReference>
<dbReference type="Pfam" id="PF04083">
    <property type="entry name" value="Abhydro_lipase"/>
    <property type="match status" value="1"/>
</dbReference>
<dbReference type="PIRSF" id="PIRSF000862">
    <property type="entry name" value="Steryl_ester_lip"/>
    <property type="match status" value="1"/>
</dbReference>
<dbReference type="SUPFAM" id="SSF53474">
    <property type="entry name" value="alpha/beta-Hydrolases"/>
    <property type="match status" value="1"/>
</dbReference>
<dbReference type="PROSITE" id="PS00120">
    <property type="entry name" value="LIPASE_SER"/>
    <property type="match status" value="1"/>
</dbReference>
<organism evidence="7">
    <name type="scientific">Mesocricetus auratus</name>
    <name type="common">Golden hamster</name>
    <dbReference type="NCBI Taxonomy" id="10036"/>
    <lineage>
        <taxon>Eukaryota</taxon>
        <taxon>Metazoa</taxon>
        <taxon>Chordata</taxon>
        <taxon>Craniata</taxon>
        <taxon>Vertebrata</taxon>
        <taxon>Euteleostomi</taxon>
        <taxon>Mammalia</taxon>
        <taxon>Eutheria</taxon>
        <taxon>Euarchontoglires</taxon>
        <taxon>Glires</taxon>
        <taxon>Rodentia</taxon>
        <taxon>Myomorpha</taxon>
        <taxon>Muroidea</taxon>
        <taxon>Cricetidae</taxon>
        <taxon>Cricetinae</taxon>
        <taxon>Mesocricetus</taxon>
    </lineage>
</organism>
<keyword id="KW-0903">Direct protein sequencing</keyword>
<keyword id="KW-1015">Disulfide bond</keyword>
<keyword id="KW-0325">Glycoprotein</keyword>
<keyword id="KW-0446">Lipid-binding</keyword>
<keyword id="KW-1185">Reference proteome</keyword>
<keyword id="KW-0964">Secreted</keyword>
<keyword id="KW-0732">Signal</keyword>
<evidence type="ECO:0000250" key="1">
    <source>
        <dbReference type="UniProtKB" id="P07098"/>
    </source>
</evidence>
<evidence type="ECO:0000255" key="2"/>
<evidence type="ECO:0000255" key="3">
    <source>
        <dbReference type="PIRNR" id="PIRNR000862"/>
    </source>
</evidence>
<evidence type="ECO:0000269" key="4">
    <source>
    </source>
</evidence>
<evidence type="ECO:0000303" key="5">
    <source>
    </source>
</evidence>
<evidence type="ECO:0000305" key="6"/>
<evidence type="ECO:0000312" key="7">
    <source>
        <dbReference type="EMBL" id="AAZ73232.1"/>
    </source>
</evidence>